<dbReference type="EC" id="6.3.1.5" evidence="1"/>
<dbReference type="EMBL" id="AJ938182">
    <property type="protein sequence ID" value="CAI81538.1"/>
    <property type="molecule type" value="Genomic_DNA"/>
</dbReference>
<dbReference type="RefSeq" id="WP_000040872.1">
    <property type="nucleotide sequence ID" value="NC_007622.1"/>
</dbReference>
<dbReference type="SMR" id="Q2YU60"/>
<dbReference type="KEGG" id="sab:SAB1849c"/>
<dbReference type="HOGENOM" id="CLU_059327_3_0_9"/>
<dbReference type="UniPathway" id="UPA00253">
    <property type="reaction ID" value="UER00333"/>
</dbReference>
<dbReference type="GO" id="GO:0005737">
    <property type="term" value="C:cytoplasm"/>
    <property type="evidence" value="ECO:0007669"/>
    <property type="project" value="InterPro"/>
</dbReference>
<dbReference type="GO" id="GO:0005524">
    <property type="term" value="F:ATP binding"/>
    <property type="evidence" value="ECO:0007669"/>
    <property type="project" value="UniProtKB-UniRule"/>
</dbReference>
<dbReference type="GO" id="GO:0004359">
    <property type="term" value="F:glutaminase activity"/>
    <property type="evidence" value="ECO:0007669"/>
    <property type="project" value="InterPro"/>
</dbReference>
<dbReference type="GO" id="GO:0046872">
    <property type="term" value="F:metal ion binding"/>
    <property type="evidence" value="ECO:0007669"/>
    <property type="project" value="UniProtKB-KW"/>
</dbReference>
<dbReference type="GO" id="GO:0003952">
    <property type="term" value="F:NAD+ synthase (glutamine-hydrolyzing) activity"/>
    <property type="evidence" value="ECO:0007669"/>
    <property type="project" value="InterPro"/>
</dbReference>
<dbReference type="GO" id="GO:0008795">
    <property type="term" value="F:NAD+ synthase activity"/>
    <property type="evidence" value="ECO:0007669"/>
    <property type="project" value="UniProtKB-UniRule"/>
</dbReference>
<dbReference type="GO" id="GO:0009435">
    <property type="term" value="P:NAD biosynthetic process"/>
    <property type="evidence" value="ECO:0007669"/>
    <property type="project" value="UniProtKB-UniRule"/>
</dbReference>
<dbReference type="CDD" id="cd00553">
    <property type="entry name" value="NAD_synthase"/>
    <property type="match status" value="1"/>
</dbReference>
<dbReference type="FunFam" id="3.40.50.620:FF:000015">
    <property type="entry name" value="NH(3)-dependent NAD(+) synthetase"/>
    <property type="match status" value="1"/>
</dbReference>
<dbReference type="Gene3D" id="3.40.50.620">
    <property type="entry name" value="HUPs"/>
    <property type="match status" value="1"/>
</dbReference>
<dbReference type="HAMAP" id="MF_00193">
    <property type="entry name" value="NadE_ammonia_dep"/>
    <property type="match status" value="1"/>
</dbReference>
<dbReference type="InterPro" id="IPR022310">
    <property type="entry name" value="NAD/GMP_synthase"/>
</dbReference>
<dbReference type="InterPro" id="IPR003694">
    <property type="entry name" value="NAD_synthase"/>
</dbReference>
<dbReference type="InterPro" id="IPR022926">
    <property type="entry name" value="NH(3)-dep_NAD(+)_synth"/>
</dbReference>
<dbReference type="InterPro" id="IPR014729">
    <property type="entry name" value="Rossmann-like_a/b/a_fold"/>
</dbReference>
<dbReference type="NCBIfam" id="TIGR00552">
    <property type="entry name" value="nadE"/>
    <property type="match status" value="1"/>
</dbReference>
<dbReference type="NCBIfam" id="NF001979">
    <property type="entry name" value="PRK00768.1"/>
    <property type="match status" value="1"/>
</dbReference>
<dbReference type="PANTHER" id="PTHR23090">
    <property type="entry name" value="NH 3 /GLUTAMINE-DEPENDENT NAD + SYNTHETASE"/>
    <property type="match status" value="1"/>
</dbReference>
<dbReference type="PANTHER" id="PTHR23090:SF7">
    <property type="entry name" value="NH(3)-DEPENDENT NAD(+) SYNTHETASE"/>
    <property type="match status" value="1"/>
</dbReference>
<dbReference type="Pfam" id="PF02540">
    <property type="entry name" value="NAD_synthase"/>
    <property type="match status" value="1"/>
</dbReference>
<dbReference type="SUPFAM" id="SSF52402">
    <property type="entry name" value="Adenine nucleotide alpha hydrolases-like"/>
    <property type="match status" value="1"/>
</dbReference>
<comment type="function">
    <text evidence="1">Catalyzes the ATP-dependent amidation of deamido-NAD to form NAD. Uses ammonia as a nitrogen source.</text>
</comment>
<comment type="catalytic activity">
    <reaction evidence="1">
        <text>deamido-NAD(+) + NH4(+) + ATP = AMP + diphosphate + NAD(+) + H(+)</text>
        <dbReference type="Rhea" id="RHEA:21188"/>
        <dbReference type="ChEBI" id="CHEBI:15378"/>
        <dbReference type="ChEBI" id="CHEBI:28938"/>
        <dbReference type="ChEBI" id="CHEBI:30616"/>
        <dbReference type="ChEBI" id="CHEBI:33019"/>
        <dbReference type="ChEBI" id="CHEBI:57540"/>
        <dbReference type="ChEBI" id="CHEBI:58437"/>
        <dbReference type="ChEBI" id="CHEBI:456215"/>
        <dbReference type="EC" id="6.3.1.5"/>
    </reaction>
</comment>
<comment type="pathway">
    <text evidence="1">Cofactor biosynthesis; NAD(+) biosynthesis; NAD(+) from deamido-NAD(+) (ammonia route): step 1/1.</text>
</comment>
<comment type="subunit">
    <text evidence="1">Homodimer.</text>
</comment>
<comment type="similarity">
    <text evidence="1">Belongs to the NAD synthetase family.</text>
</comment>
<name>NADE_STAAB</name>
<evidence type="ECO:0000255" key="1">
    <source>
        <dbReference type="HAMAP-Rule" id="MF_00193"/>
    </source>
</evidence>
<feature type="chain" id="PRO_1000077617" description="NH(3)-dependent NAD(+) synthetase">
    <location>
        <begin position="1"/>
        <end position="273"/>
    </location>
</feature>
<feature type="binding site" evidence="1">
    <location>
        <begin position="47"/>
        <end position="54"/>
    </location>
    <ligand>
        <name>ATP</name>
        <dbReference type="ChEBI" id="CHEBI:30616"/>
    </ligand>
</feature>
<feature type="binding site" evidence="1">
    <location>
        <position position="53"/>
    </location>
    <ligand>
        <name>Mg(2+)</name>
        <dbReference type="ChEBI" id="CHEBI:18420"/>
    </ligand>
</feature>
<feature type="binding site" evidence="1">
    <location>
        <position position="139"/>
    </location>
    <ligand>
        <name>deamido-NAD(+)</name>
        <dbReference type="ChEBI" id="CHEBI:58437"/>
    </ligand>
</feature>
<feature type="binding site" evidence="1">
    <location>
        <position position="159"/>
    </location>
    <ligand>
        <name>ATP</name>
        <dbReference type="ChEBI" id="CHEBI:30616"/>
    </ligand>
</feature>
<feature type="binding site" evidence="1">
    <location>
        <position position="164"/>
    </location>
    <ligand>
        <name>Mg(2+)</name>
        <dbReference type="ChEBI" id="CHEBI:18420"/>
    </ligand>
</feature>
<feature type="binding site" evidence="1">
    <location>
        <position position="172"/>
    </location>
    <ligand>
        <name>deamido-NAD(+)</name>
        <dbReference type="ChEBI" id="CHEBI:58437"/>
    </ligand>
</feature>
<feature type="binding site" evidence="1">
    <location>
        <position position="179"/>
    </location>
    <ligand>
        <name>deamido-NAD(+)</name>
        <dbReference type="ChEBI" id="CHEBI:58437"/>
    </ligand>
</feature>
<feature type="binding site" evidence="1">
    <location>
        <position position="188"/>
    </location>
    <ligand>
        <name>ATP</name>
        <dbReference type="ChEBI" id="CHEBI:30616"/>
    </ligand>
</feature>
<feature type="binding site" evidence="1">
    <location>
        <position position="210"/>
    </location>
    <ligand>
        <name>ATP</name>
        <dbReference type="ChEBI" id="CHEBI:30616"/>
    </ligand>
</feature>
<feature type="binding site" evidence="1">
    <location>
        <begin position="259"/>
        <end position="260"/>
    </location>
    <ligand>
        <name>deamido-NAD(+)</name>
        <dbReference type="ChEBI" id="CHEBI:58437"/>
    </ligand>
</feature>
<reference key="1">
    <citation type="journal article" date="2007" name="PLoS ONE">
        <title>Molecular correlates of host specialization in Staphylococcus aureus.</title>
        <authorList>
            <person name="Herron-Olson L."/>
            <person name="Fitzgerald J.R."/>
            <person name="Musser J.M."/>
            <person name="Kapur V."/>
        </authorList>
    </citation>
    <scope>NUCLEOTIDE SEQUENCE [LARGE SCALE GENOMIC DNA]</scope>
    <source>
        <strain>bovine RF122 / ET3-1</strain>
    </source>
</reference>
<organism>
    <name type="scientific">Staphylococcus aureus (strain bovine RF122 / ET3-1)</name>
    <dbReference type="NCBI Taxonomy" id="273036"/>
    <lineage>
        <taxon>Bacteria</taxon>
        <taxon>Bacillati</taxon>
        <taxon>Bacillota</taxon>
        <taxon>Bacilli</taxon>
        <taxon>Bacillales</taxon>
        <taxon>Staphylococcaceae</taxon>
        <taxon>Staphylococcus</taxon>
    </lineage>
</organism>
<proteinExistence type="inferred from homology"/>
<keyword id="KW-0067">ATP-binding</keyword>
<keyword id="KW-0436">Ligase</keyword>
<keyword id="KW-0460">Magnesium</keyword>
<keyword id="KW-0479">Metal-binding</keyword>
<keyword id="KW-0520">NAD</keyword>
<keyword id="KW-0547">Nucleotide-binding</keyword>
<sequence>MSKLQDVIVQEMKVKKRIDSAEEIMELKQFIKNYVQSHSFIKSLVLGISGGQDSTLVGKLVQMSVNELREEGIDCTFIAVKLPYGVQKDADEVEQALRFIEPDEIVTVNIKPAVDQSVQSLKEAGIVLTDFQKGNEKARERMKVQFSIASNRQGIVVGTDHSAENITGFYTKYGDGAADIAPIFGLNKRQGRQLLAYLGAPKELYEKTPTADLEDDKPQLPDEDALGVTYEAIDNYLEGKPVSPEEQKVIENHYIRNAHKRELAYTRYTWPKS</sequence>
<gene>
    <name evidence="1" type="primary">nadE</name>
    <name type="ordered locus">SAB1849c</name>
</gene>
<accession>Q2YU60</accession>
<protein>
    <recommendedName>
        <fullName evidence="1">NH(3)-dependent NAD(+) synthetase</fullName>
        <ecNumber evidence="1">6.3.1.5</ecNumber>
    </recommendedName>
</protein>